<comment type="subcellular location">
    <subcellularLocation>
        <location evidence="1">Cell membrane</location>
        <topology evidence="1">Lipid-anchor</topology>
    </subcellularLocation>
</comment>
<comment type="similarity">
    <text evidence="1">Belongs to the UPF0257 family.</text>
</comment>
<reference key="1">
    <citation type="journal article" date="2009" name="PLoS Genet.">
        <title>Organised genome dynamics in the Escherichia coli species results in highly diverse adaptive paths.</title>
        <authorList>
            <person name="Touchon M."/>
            <person name="Hoede C."/>
            <person name="Tenaillon O."/>
            <person name="Barbe V."/>
            <person name="Baeriswyl S."/>
            <person name="Bidet P."/>
            <person name="Bingen E."/>
            <person name="Bonacorsi S."/>
            <person name="Bouchier C."/>
            <person name="Bouvet O."/>
            <person name="Calteau A."/>
            <person name="Chiapello H."/>
            <person name="Clermont O."/>
            <person name="Cruveiller S."/>
            <person name="Danchin A."/>
            <person name="Diard M."/>
            <person name="Dossat C."/>
            <person name="Karoui M.E."/>
            <person name="Frapy E."/>
            <person name="Garry L."/>
            <person name="Ghigo J.M."/>
            <person name="Gilles A.M."/>
            <person name="Johnson J."/>
            <person name="Le Bouguenec C."/>
            <person name="Lescat M."/>
            <person name="Mangenot S."/>
            <person name="Martinez-Jehanne V."/>
            <person name="Matic I."/>
            <person name="Nassif X."/>
            <person name="Oztas S."/>
            <person name="Petit M.A."/>
            <person name="Pichon C."/>
            <person name="Rouy Z."/>
            <person name="Ruf C.S."/>
            <person name="Schneider D."/>
            <person name="Tourret J."/>
            <person name="Vacherie B."/>
            <person name="Vallenet D."/>
            <person name="Medigue C."/>
            <person name="Rocha E.P.C."/>
            <person name="Denamur E."/>
        </authorList>
    </citation>
    <scope>NUCLEOTIDE SEQUENCE [LARGE SCALE GENOMIC DNA]</scope>
    <source>
        <strain>UMN026 / ExPEC</strain>
    </source>
</reference>
<feature type="signal peptide" evidence="1">
    <location>
        <begin position="1"/>
        <end position="16"/>
    </location>
</feature>
<feature type="chain" id="PRO_1000136555" description="UPF0257 lipoprotein YnfC">
    <location>
        <begin position="17"/>
        <end position="236"/>
    </location>
</feature>
<feature type="lipid moiety-binding region" description="N-palmitoyl cysteine" evidence="1">
    <location>
        <position position="17"/>
    </location>
</feature>
<feature type="lipid moiety-binding region" description="S-diacylglycerol cysteine" evidence="1">
    <location>
        <position position="17"/>
    </location>
</feature>
<organism>
    <name type="scientific">Escherichia coli O17:K52:H18 (strain UMN026 / ExPEC)</name>
    <dbReference type="NCBI Taxonomy" id="585056"/>
    <lineage>
        <taxon>Bacteria</taxon>
        <taxon>Pseudomonadati</taxon>
        <taxon>Pseudomonadota</taxon>
        <taxon>Gammaproteobacteria</taxon>
        <taxon>Enterobacterales</taxon>
        <taxon>Enterobacteriaceae</taxon>
        <taxon>Escherichia</taxon>
    </lineage>
</organism>
<keyword id="KW-1003">Cell membrane</keyword>
<keyword id="KW-0449">Lipoprotein</keyword>
<keyword id="KW-0472">Membrane</keyword>
<keyword id="KW-0564">Palmitate</keyword>
<keyword id="KW-0732">Signal</keyword>
<gene>
    <name evidence="1" type="primary">ynfC</name>
    <name type="ordered locus">ECUMN_1870</name>
</gene>
<proteinExistence type="inferred from homology"/>
<name>YNFC_ECOLU</name>
<dbReference type="EMBL" id="CU928163">
    <property type="protein sequence ID" value="CAR13069.1"/>
    <property type="molecule type" value="Genomic_DNA"/>
</dbReference>
<dbReference type="RefSeq" id="WP_001309527.1">
    <property type="nucleotide sequence ID" value="NC_011751.1"/>
</dbReference>
<dbReference type="RefSeq" id="YP_002412603.1">
    <property type="nucleotide sequence ID" value="NC_011751.1"/>
</dbReference>
<dbReference type="KEGG" id="eum:ECUMN_1870"/>
<dbReference type="PATRIC" id="fig|585056.7.peg.2057"/>
<dbReference type="HOGENOM" id="CLU_1174761_0_0_6"/>
<dbReference type="Proteomes" id="UP000007097">
    <property type="component" value="Chromosome"/>
</dbReference>
<dbReference type="GO" id="GO:0005886">
    <property type="term" value="C:plasma membrane"/>
    <property type="evidence" value="ECO:0007669"/>
    <property type="project" value="UniProtKB-SubCell"/>
</dbReference>
<dbReference type="HAMAP" id="MF_01065">
    <property type="entry name" value="UPF0257"/>
    <property type="match status" value="1"/>
</dbReference>
<dbReference type="InterPro" id="IPR010646">
    <property type="entry name" value="UPF0257"/>
</dbReference>
<dbReference type="NCBIfam" id="NF002798">
    <property type="entry name" value="PRK02939.1"/>
    <property type="match status" value="1"/>
</dbReference>
<dbReference type="Pfam" id="PF06788">
    <property type="entry name" value="UPF0257"/>
    <property type="match status" value="1"/>
</dbReference>
<dbReference type="PROSITE" id="PS51257">
    <property type="entry name" value="PROKAR_LIPOPROTEIN"/>
    <property type="match status" value="1"/>
</dbReference>
<sequence length="236" mass="26543">MKYKLLPCLLAIFLTGCDRTEVTLSFTPEMASFSNEFDFDPLRGPVKDFTQTLMDEQGEVTKRVSGTLSEEGCFDSLELLDLENNTVVALVLDANYYRDAQTLEKRVRLQGKCQLAELPSAGVSWETDDNGFVIKASSKQMQMEYRYDDQGYPLGKTTKSHDKTLSVSATPSTDPIKKLDYTAVTILNNQRVGNVKQSCEYDSHANPVDCQLIIVDEGVKPAIERVYTIKNTIDYY</sequence>
<evidence type="ECO:0000255" key="1">
    <source>
        <dbReference type="HAMAP-Rule" id="MF_01065"/>
    </source>
</evidence>
<accession>B7NB35</accession>
<protein>
    <recommendedName>
        <fullName evidence="1">UPF0257 lipoprotein YnfC</fullName>
    </recommendedName>
</protein>